<protein>
    <recommendedName>
        <fullName evidence="1">Large ribosomal subunit protein uL14</fullName>
    </recommendedName>
    <alternativeName>
        <fullName evidence="2">50S ribosomal protein L14</fullName>
    </alternativeName>
</protein>
<reference key="1">
    <citation type="journal article" date="2009" name="PLoS Genet.">
        <title>Organised genome dynamics in the Escherichia coli species results in highly diverse adaptive paths.</title>
        <authorList>
            <person name="Touchon M."/>
            <person name="Hoede C."/>
            <person name="Tenaillon O."/>
            <person name="Barbe V."/>
            <person name="Baeriswyl S."/>
            <person name="Bidet P."/>
            <person name="Bingen E."/>
            <person name="Bonacorsi S."/>
            <person name="Bouchier C."/>
            <person name="Bouvet O."/>
            <person name="Calteau A."/>
            <person name="Chiapello H."/>
            <person name="Clermont O."/>
            <person name="Cruveiller S."/>
            <person name="Danchin A."/>
            <person name="Diard M."/>
            <person name="Dossat C."/>
            <person name="Karoui M.E."/>
            <person name="Frapy E."/>
            <person name="Garry L."/>
            <person name="Ghigo J.M."/>
            <person name="Gilles A.M."/>
            <person name="Johnson J."/>
            <person name="Le Bouguenec C."/>
            <person name="Lescat M."/>
            <person name="Mangenot S."/>
            <person name="Martinez-Jehanne V."/>
            <person name="Matic I."/>
            <person name="Nassif X."/>
            <person name="Oztas S."/>
            <person name="Petit M.A."/>
            <person name="Pichon C."/>
            <person name="Rouy Z."/>
            <person name="Ruf C.S."/>
            <person name="Schneider D."/>
            <person name="Tourret J."/>
            <person name="Vacherie B."/>
            <person name="Vallenet D."/>
            <person name="Medigue C."/>
            <person name="Rocha E.P.C."/>
            <person name="Denamur E."/>
        </authorList>
    </citation>
    <scope>NUCLEOTIDE SEQUENCE [LARGE SCALE GENOMIC DNA]</scope>
    <source>
        <strain>ATCC 35469 / DSM 13698 / BCRC 15582 / CCUG 18766 / IAM 14443 / JCM 21226 / LMG 7866 / NBRC 102419 / NCTC 12128 / CDC 0568-73</strain>
    </source>
</reference>
<sequence length="123" mass="13541">MIQEQTMLNVADNSGARRVMCIKVLGGSHRRYAGVGDIIKITIKEAIPRGKVKKGDVLKAVVVRTKKGVRRPDGSVIRFDGNACVLLNNNSEQPIGTRIFGPVTRELRSEKFMKIISLAPEVL</sequence>
<organism>
    <name type="scientific">Escherichia fergusonii (strain ATCC 35469 / DSM 13698 / CCUG 18766 / IAM 14443 / JCM 21226 / LMG 7866 / NBRC 102419 / NCTC 12128 / CDC 0568-73)</name>
    <dbReference type="NCBI Taxonomy" id="585054"/>
    <lineage>
        <taxon>Bacteria</taxon>
        <taxon>Pseudomonadati</taxon>
        <taxon>Pseudomonadota</taxon>
        <taxon>Gammaproteobacteria</taxon>
        <taxon>Enterobacterales</taxon>
        <taxon>Enterobacteriaceae</taxon>
        <taxon>Escherichia</taxon>
    </lineage>
</organism>
<dbReference type="EMBL" id="CU928158">
    <property type="protein sequence ID" value="CAQ90773.1"/>
    <property type="molecule type" value="Genomic_DNA"/>
</dbReference>
<dbReference type="RefSeq" id="WP_000613955.1">
    <property type="nucleotide sequence ID" value="NC_011740.1"/>
</dbReference>
<dbReference type="SMR" id="B7LRS6"/>
<dbReference type="GeneID" id="93778677"/>
<dbReference type="KEGG" id="efe:EFER_3293"/>
<dbReference type="HOGENOM" id="CLU_095071_2_1_6"/>
<dbReference type="OrthoDB" id="9806379at2"/>
<dbReference type="Proteomes" id="UP000000745">
    <property type="component" value="Chromosome"/>
</dbReference>
<dbReference type="GO" id="GO:0022625">
    <property type="term" value="C:cytosolic large ribosomal subunit"/>
    <property type="evidence" value="ECO:0007669"/>
    <property type="project" value="TreeGrafter"/>
</dbReference>
<dbReference type="GO" id="GO:0070180">
    <property type="term" value="F:large ribosomal subunit rRNA binding"/>
    <property type="evidence" value="ECO:0007669"/>
    <property type="project" value="TreeGrafter"/>
</dbReference>
<dbReference type="GO" id="GO:0003735">
    <property type="term" value="F:structural constituent of ribosome"/>
    <property type="evidence" value="ECO:0007669"/>
    <property type="project" value="InterPro"/>
</dbReference>
<dbReference type="GO" id="GO:0006412">
    <property type="term" value="P:translation"/>
    <property type="evidence" value="ECO:0007669"/>
    <property type="project" value="UniProtKB-UniRule"/>
</dbReference>
<dbReference type="CDD" id="cd00337">
    <property type="entry name" value="Ribosomal_uL14"/>
    <property type="match status" value="1"/>
</dbReference>
<dbReference type="FunFam" id="2.40.150.20:FF:000001">
    <property type="entry name" value="50S ribosomal protein L14"/>
    <property type="match status" value="1"/>
</dbReference>
<dbReference type="Gene3D" id="2.40.150.20">
    <property type="entry name" value="Ribosomal protein L14"/>
    <property type="match status" value="1"/>
</dbReference>
<dbReference type="HAMAP" id="MF_01367">
    <property type="entry name" value="Ribosomal_uL14"/>
    <property type="match status" value="1"/>
</dbReference>
<dbReference type="InterPro" id="IPR000218">
    <property type="entry name" value="Ribosomal_uL14"/>
</dbReference>
<dbReference type="InterPro" id="IPR005745">
    <property type="entry name" value="Ribosomal_uL14_bac-type"/>
</dbReference>
<dbReference type="InterPro" id="IPR019972">
    <property type="entry name" value="Ribosomal_uL14_CS"/>
</dbReference>
<dbReference type="InterPro" id="IPR036853">
    <property type="entry name" value="Ribosomal_uL14_sf"/>
</dbReference>
<dbReference type="NCBIfam" id="TIGR01067">
    <property type="entry name" value="rplN_bact"/>
    <property type="match status" value="1"/>
</dbReference>
<dbReference type="PANTHER" id="PTHR11761">
    <property type="entry name" value="50S/60S RIBOSOMAL PROTEIN L14/L23"/>
    <property type="match status" value="1"/>
</dbReference>
<dbReference type="PANTHER" id="PTHR11761:SF3">
    <property type="entry name" value="LARGE RIBOSOMAL SUBUNIT PROTEIN UL14M"/>
    <property type="match status" value="1"/>
</dbReference>
<dbReference type="Pfam" id="PF00238">
    <property type="entry name" value="Ribosomal_L14"/>
    <property type="match status" value="1"/>
</dbReference>
<dbReference type="SMART" id="SM01374">
    <property type="entry name" value="Ribosomal_L14"/>
    <property type="match status" value="1"/>
</dbReference>
<dbReference type="SUPFAM" id="SSF50193">
    <property type="entry name" value="Ribosomal protein L14"/>
    <property type="match status" value="1"/>
</dbReference>
<dbReference type="PROSITE" id="PS00049">
    <property type="entry name" value="RIBOSOMAL_L14"/>
    <property type="match status" value="1"/>
</dbReference>
<feature type="chain" id="PRO_1000144272" description="Large ribosomal subunit protein uL14">
    <location>
        <begin position="1"/>
        <end position="123"/>
    </location>
</feature>
<name>RL14_ESCF3</name>
<proteinExistence type="inferred from homology"/>
<accession>B7LRS6</accession>
<comment type="function">
    <text evidence="1">Binds to 23S rRNA. Forms part of two intersubunit bridges in the 70S ribosome.</text>
</comment>
<comment type="subunit">
    <text evidence="1">Part of the 50S ribosomal subunit. Forms a cluster with proteins L3 and L19. In the 70S ribosome, L14 and L19 interact and together make contacts with the 16S rRNA in bridges B5 and B8.</text>
</comment>
<comment type="similarity">
    <text evidence="1">Belongs to the universal ribosomal protein uL14 family.</text>
</comment>
<keyword id="KW-0687">Ribonucleoprotein</keyword>
<keyword id="KW-0689">Ribosomal protein</keyword>
<keyword id="KW-0694">RNA-binding</keyword>
<keyword id="KW-0699">rRNA-binding</keyword>
<evidence type="ECO:0000255" key="1">
    <source>
        <dbReference type="HAMAP-Rule" id="MF_01367"/>
    </source>
</evidence>
<evidence type="ECO:0000305" key="2"/>
<gene>
    <name evidence="1" type="primary">rplN</name>
    <name type="ordered locus">EFER_3293</name>
</gene>